<dbReference type="EMBL" id="CP000661">
    <property type="protein sequence ID" value="ABP68928.1"/>
    <property type="molecule type" value="Genomic_DNA"/>
</dbReference>
<dbReference type="SMR" id="A4WNG4"/>
<dbReference type="STRING" id="349102.Rsph17025_0016"/>
<dbReference type="KEGG" id="rsq:Rsph17025_0016"/>
<dbReference type="eggNOG" id="COG3022">
    <property type="taxonomic scope" value="Bacteria"/>
</dbReference>
<dbReference type="HOGENOM" id="CLU_061989_0_0_5"/>
<dbReference type="BioCyc" id="RSPH349102:G1G8M-16-MONOMER"/>
<dbReference type="GO" id="GO:0005829">
    <property type="term" value="C:cytosol"/>
    <property type="evidence" value="ECO:0007669"/>
    <property type="project" value="TreeGrafter"/>
</dbReference>
<dbReference type="GO" id="GO:0033194">
    <property type="term" value="P:response to hydroperoxide"/>
    <property type="evidence" value="ECO:0007669"/>
    <property type="project" value="TreeGrafter"/>
</dbReference>
<dbReference type="HAMAP" id="MF_00652">
    <property type="entry name" value="UPF0246"/>
    <property type="match status" value="1"/>
</dbReference>
<dbReference type="InterPro" id="IPR005583">
    <property type="entry name" value="YaaA"/>
</dbReference>
<dbReference type="NCBIfam" id="NF002542">
    <property type="entry name" value="PRK02101.1-3"/>
    <property type="match status" value="1"/>
</dbReference>
<dbReference type="PANTHER" id="PTHR30283:SF4">
    <property type="entry name" value="PEROXIDE STRESS RESISTANCE PROTEIN YAAA"/>
    <property type="match status" value="1"/>
</dbReference>
<dbReference type="PANTHER" id="PTHR30283">
    <property type="entry name" value="PEROXIDE STRESS RESPONSE PROTEIN YAAA"/>
    <property type="match status" value="1"/>
</dbReference>
<dbReference type="Pfam" id="PF03883">
    <property type="entry name" value="H2O2_YaaD"/>
    <property type="match status" value="1"/>
</dbReference>
<gene>
    <name type="ordered locus">Rsph17025_0016</name>
</gene>
<protein>
    <recommendedName>
        <fullName evidence="1">UPF0246 protein Rsph17025_0016</fullName>
    </recommendedName>
</protein>
<reference key="1">
    <citation type="submission" date="2007-04" db="EMBL/GenBank/DDBJ databases">
        <title>Complete sequence of chromosome of Rhodobacter sphaeroides ATCC 17025.</title>
        <authorList>
            <consortium name="US DOE Joint Genome Institute"/>
            <person name="Copeland A."/>
            <person name="Lucas S."/>
            <person name="Lapidus A."/>
            <person name="Barry K."/>
            <person name="Detter J.C."/>
            <person name="Glavina del Rio T."/>
            <person name="Hammon N."/>
            <person name="Israni S."/>
            <person name="Dalin E."/>
            <person name="Tice H."/>
            <person name="Pitluck S."/>
            <person name="Chertkov O."/>
            <person name="Brettin T."/>
            <person name="Bruce D."/>
            <person name="Han C."/>
            <person name="Schmutz J."/>
            <person name="Larimer F."/>
            <person name="Land M."/>
            <person name="Hauser L."/>
            <person name="Kyrpides N."/>
            <person name="Kim E."/>
            <person name="Richardson P."/>
            <person name="Mackenzie C."/>
            <person name="Choudhary M."/>
            <person name="Donohue T.J."/>
            <person name="Kaplan S."/>
        </authorList>
    </citation>
    <scope>NUCLEOTIDE SEQUENCE [LARGE SCALE GENOMIC DNA]</scope>
    <source>
        <strain>ATCC 17025 / ATH 2.4.3</strain>
    </source>
</reference>
<organism>
    <name type="scientific">Cereibacter sphaeroides (strain ATCC 17025 / ATH 2.4.3)</name>
    <name type="common">Rhodobacter sphaeroides</name>
    <dbReference type="NCBI Taxonomy" id="349102"/>
    <lineage>
        <taxon>Bacteria</taxon>
        <taxon>Pseudomonadati</taxon>
        <taxon>Pseudomonadota</taxon>
        <taxon>Alphaproteobacteria</taxon>
        <taxon>Rhodobacterales</taxon>
        <taxon>Paracoccaceae</taxon>
        <taxon>Cereibacter</taxon>
    </lineage>
</organism>
<feature type="chain" id="PRO_1000061629" description="UPF0246 protein Rsph17025_0016">
    <location>
        <begin position="1"/>
        <end position="257"/>
    </location>
</feature>
<evidence type="ECO:0000255" key="1">
    <source>
        <dbReference type="HAMAP-Rule" id="MF_00652"/>
    </source>
</evidence>
<sequence length="257" mass="28658">MLTVLSPAKRLAARPRLDLPRGLSPTSPRFQNEADELAAVARGLTAADLRRLMHISEPLARLNVARFAEFHEARTAAVPALALFDGDTYAGLEARTLDEDALRWAQDRVCILSGLYGLLRPLDLIQPHRLEMGTRLKTARGVSLYEFWGDRIALALNERATKTGARALINCASAEYFSAVDLEALSLPVISPVFLEEREGERRIVSFWAKRSRGAMARFIAENRLEHPEEILSFRAGGYAFEPDLSTDDRPVFLRTA</sequence>
<accession>A4WNG4</accession>
<name>Y016_CERS5</name>
<proteinExistence type="inferred from homology"/>
<comment type="similarity">
    <text evidence="1">Belongs to the UPF0246 family.</text>
</comment>